<gene>
    <name type="ordered locus">At2g16250</name>
    <name type="ORF">F16F14.25</name>
</gene>
<name>Y2165_ARATH</name>
<dbReference type="EC" id="2.7.11.1"/>
<dbReference type="EMBL" id="AC007047">
    <property type="protein sequence ID" value="AAD22312.1"/>
    <property type="status" value="ALT_SEQ"/>
    <property type="molecule type" value="Genomic_DNA"/>
</dbReference>
<dbReference type="EMBL" id="CP002685">
    <property type="protein sequence ID" value="AEC06478.1"/>
    <property type="molecule type" value="Genomic_DNA"/>
</dbReference>
<dbReference type="EMBL" id="FJ708694">
    <property type="protein sequence ID" value="ACN59289.1"/>
    <property type="molecule type" value="mRNA"/>
</dbReference>
<dbReference type="PIR" id="C84538">
    <property type="entry name" value="C84538"/>
</dbReference>
<dbReference type="RefSeq" id="NP_179220.2">
    <property type="nucleotide sequence ID" value="NM_127181.3"/>
</dbReference>
<dbReference type="SMR" id="C0LGK4"/>
<dbReference type="BioGRID" id="1480">
    <property type="interactions" value="53"/>
</dbReference>
<dbReference type="FunCoup" id="C0LGK4">
    <property type="interactions" value="1820"/>
</dbReference>
<dbReference type="IntAct" id="C0LGK4">
    <property type="interactions" value="46"/>
</dbReference>
<dbReference type="STRING" id="3702.C0LGK4"/>
<dbReference type="GlyGen" id="C0LGK4">
    <property type="glycosylation" value="12 sites"/>
</dbReference>
<dbReference type="iPTMnet" id="C0LGK4"/>
<dbReference type="PaxDb" id="3702-AT2G16250.1"/>
<dbReference type="ProteomicsDB" id="243145"/>
<dbReference type="EnsemblPlants" id="AT2G16250.1">
    <property type="protein sequence ID" value="AT2G16250.1"/>
    <property type="gene ID" value="AT2G16250"/>
</dbReference>
<dbReference type="GeneID" id="816121"/>
<dbReference type="Gramene" id="AT2G16250.1">
    <property type="protein sequence ID" value="AT2G16250.1"/>
    <property type="gene ID" value="AT2G16250"/>
</dbReference>
<dbReference type="KEGG" id="ath:AT2G16250"/>
<dbReference type="Araport" id="AT2G16250"/>
<dbReference type="TAIR" id="AT2G16250"/>
<dbReference type="eggNOG" id="ENOG502QR5S">
    <property type="taxonomic scope" value="Eukaryota"/>
</dbReference>
<dbReference type="HOGENOM" id="CLU_000288_22_6_1"/>
<dbReference type="InParanoid" id="C0LGK4"/>
<dbReference type="OMA" id="QEGDIHQ"/>
<dbReference type="OrthoDB" id="676979at2759"/>
<dbReference type="PhylomeDB" id="C0LGK4"/>
<dbReference type="PRO" id="PR:C0LGK4"/>
<dbReference type="Proteomes" id="UP000006548">
    <property type="component" value="Chromosome 2"/>
</dbReference>
<dbReference type="ExpressionAtlas" id="C0LGK4">
    <property type="expression patterns" value="baseline and differential"/>
</dbReference>
<dbReference type="GO" id="GO:0009505">
    <property type="term" value="C:plant-type cell wall"/>
    <property type="evidence" value="ECO:0007005"/>
    <property type="project" value="TAIR"/>
</dbReference>
<dbReference type="GO" id="GO:0005886">
    <property type="term" value="C:plasma membrane"/>
    <property type="evidence" value="ECO:0007005"/>
    <property type="project" value="TAIR"/>
</dbReference>
<dbReference type="GO" id="GO:0009506">
    <property type="term" value="C:plasmodesma"/>
    <property type="evidence" value="ECO:0007005"/>
    <property type="project" value="TAIR"/>
</dbReference>
<dbReference type="GO" id="GO:0005524">
    <property type="term" value="F:ATP binding"/>
    <property type="evidence" value="ECO:0007669"/>
    <property type="project" value="UniProtKB-KW"/>
</dbReference>
<dbReference type="GO" id="GO:0106310">
    <property type="term" value="F:protein serine kinase activity"/>
    <property type="evidence" value="ECO:0007669"/>
    <property type="project" value="RHEA"/>
</dbReference>
<dbReference type="GO" id="GO:0004674">
    <property type="term" value="F:protein serine/threonine kinase activity"/>
    <property type="evidence" value="ECO:0007669"/>
    <property type="project" value="UniProtKB-KW"/>
</dbReference>
<dbReference type="FunFam" id="3.80.10.10:FF:000383">
    <property type="entry name" value="Leucine-rich repeat receptor protein kinase EMS1"/>
    <property type="match status" value="1"/>
</dbReference>
<dbReference type="FunFam" id="3.30.200.20:FF:000433">
    <property type="entry name" value="Predicted protein"/>
    <property type="match status" value="1"/>
</dbReference>
<dbReference type="FunFam" id="3.80.10.10:FF:000561">
    <property type="entry name" value="Probable LRR receptor-like serine/threonine-protein kinase At2g16250"/>
    <property type="match status" value="1"/>
</dbReference>
<dbReference type="FunFam" id="3.80.10.10:FF:001128">
    <property type="entry name" value="Probable LRR receptor-like serine/threonine-protein kinase At2g16250"/>
    <property type="match status" value="1"/>
</dbReference>
<dbReference type="FunFam" id="1.10.510.10:FF:000448">
    <property type="entry name" value="Putative LRR receptor-like serine/threonine-protein kinase"/>
    <property type="match status" value="1"/>
</dbReference>
<dbReference type="Gene3D" id="3.30.200.20">
    <property type="entry name" value="Phosphorylase Kinase, domain 1"/>
    <property type="match status" value="1"/>
</dbReference>
<dbReference type="Gene3D" id="3.80.10.10">
    <property type="entry name" value="Ribonuclease Inhibitor"/>
    <property type="match status" value="3"/>
</dbReference>
<dbReference type="Gene3D" id="1.10.510.10">
    <property type="entry name" value="Transferase(Phosphotransferase) domain 1"/>
    <property type="match status" value="1"/>
</dbReference>
<dbReference type="InterPro" id="IPR011009">
    <property type="entry name" value="Kinase-like_dom_sf"/>
</dbReference>
<dbReference type="InterPro" id="IPR001611">
    <property type="entry name" value="Leu-rich_rpt"/>
</dbReference>
<dbReference type="InterPro" id="IPR003591">
    <property type="entry name" value="Leu-rich_rpt_typical-subtyp"/>
</dbReference>
<dbReference type="InterPro" id="IPR032675">
    <property type="entry name" value="LRR_dom_sf"/>
</dbReference>
<dbReference type="InterPro" id="IPR055414">
    <property type="entry name" value="LRR_R13L4/SHOC2-like"/>
</dbReference>
<dbReference type="InterPro" id="IPR000719">
    <property type="entry name" value="Prot_kinase_dom"/>
</dbReference>
<dbReference type="InterPro" id="IPR001245">
    <property type="entry name" value="Ser-Thr/Tyr_kinase_cat_dom"/>
</dbReference>
<dbReference type="PANTHER" id="PTHR27000">
    <property type="entry name" value="LEUCINE-RICH REPEAT RECEPTOR-LIKE PROTEIN KINASE FAMILY PROTEIN-RELATED"/>
    <property type="match status" value="1"/>
</dbReference>
<dbReference type="PANTHER" id="PTHR27000:SF775">
    <property type="entry name" value="PLANT INTRACELLULAR RAS-GROUP-RELATED LRR PROTEIN 3"/>
    <property type="match status" value="1"/>
</dbReference>
<dbReference type="Pfam" id="PF23598">
    <property type="entry name" value="LRR_14"/>
    <property type="match status" value="1"/>
</dbReference>
<dbReference type="Pfam" id="PF07714">
    <property type="entry name" value="PK_Tyr_Ser-Thr"/>
    <property type="match status" value="1"/>
</dbReference>
<dbReference type="SMART" id="SM00369">
    <property type="entry name" value="LRR_TYP"/>
    <property type="match status" value="6"/>
</dbReference>
<dbReference type="SUPFAM" id="SSF52058">
    <property type="entry name" value="L domain-like"/>
    <property type="match status" value="1"/>
</dbReference>
<dbReference type="SUPFAM" id="SSF56112">
    <property type="entry name" value="Protein kinase-like (PK-like)"/>
    <property type="match status" value="1"/>
</dbReference>
<dbReference type="PROSITE" id="PS51450">
    <property type="entry name" value="LRR"/>
    <property type="match status" value="7"/>
</dbReference>
<dbReference type="PROSITE" id="PS50011">
    <property type="entry name" value="PROTEIN_KINASE_DOM"/>
    <property type="match status" value="1"/>
</dbReference>
<feature type="signal peptide" evidence="1">
    <location>
        <begin position="1"/>
        <end position="28"/>
    </location>
</feature>
<feature type="chain" id="PRO_0000387546" description="Probable LRR receptor-like serine/threonine-protein kinase At2g16250">
    <location>
        <begin position="29"/>
        <end position="915"/>
    </location>
</feature>
<feature type="topological domain" description="Extracellular" evidence="1">
    <location>
        <begin position="29"/>
        <end position="451"/>
    </location>
</feature>
<feature type="transmembrane region" description="Helical" evidence="1">
    <location>
        <begin position="452"/>
        <end position="472"/>
    </location>
</feature>
<feature type="topological domain" description="Cytoplasmic" evidence="1">
    <location>
        <begin position="473"/>
        <end position="915"/>
    </location>
</feature>
<feature type="repeat" description="LRR 1">
    <location>
        <begin position="102"/>
        <end position="125"/>
    </location>
</feature>
<feature type="repeat" description="LRR 2">
    <location>
        <begin position="127"/>
        <end position="150"/>
    </location>
</feature>
<feature type="repeat" description="LRR 3">
    <location>
        <begin position="151"/>
        <end position="174"/>
    </location>
</feature>
<feature type="repeat" description="LRR 4">
    <location>
        <begin position="176"/>
        <end position="198"/>
    </location>
</feature>
<feature type="repeat" description="LRR 5">
    <location>
        <begin position="199"/>
        <end position="223"/>
    </location>
</feature>
<feature type="repeat" description="LRR 6">
    <location>
        <begin position="225"/>
        <end position="247"/>
    </location>
</feature>
<feature type="repeat" description="LRR 7">
    <location>
        <begin position="248"/>
        <end position="271"/>
    </location>
</feature>
<feature type="repeat" description="LRR 8">
    <location>
        <begin position="272"/>
        <end position="295"/>
    </location>
</feature>
<feature type="repeat" description="LRR 9">
    <location>
        <begin position="297"/>
        <end position="320"/>
    </location>
</feature>
<feature type="repeat" description="LRR 10">
    <location>
        <begin position="321"/>
        <end position="344"/>
    </location>
</feature>
<feature type="repeat" description="LRR 11">
    <location>
        <begin position="366"/>
        <end position="390"/>
    </location>
</feature>
<feature type="domain" description="Protein kinase" evidence="2">
    <location>
        <begin position="527"/>
        <end position="811"/>
    </location>
</feature>
<feature type="region of interest" description="Disordered" evidence="3">
    <location>
        <begin position="482"/>
        <end position="503"/>
    </location>
</feature>
<feature type="region of interest" description="Disordered" evidence="3">
    <location>
        <begin position="851"/>
        <end position="915"/>
    </location>
</feature>
<feature type="compositionally biased region" description="Gly residues" evidence="3">
    <location>
        <begin position="859"/>
        <end position="870"/>
    </location>
</feature>
<feature type="compositionally biased region" description="Low complexity" evidence="3">
    <location>
        <begin position="871"/>
        <end position="892"/>
    </location>
</feature>
<feature type="active site" description="Proton acceptor" evidence="2">
    <location>
        <position position="657"/>
    </location>
</feature>
<feature type="binding site" evidence="2">
    <location>
        <begin position="533"/>
        <end position="541"/>
    </location>
    <ligand>
        <name>ATP</name>
        <dbReference type="ChEBI" id="CHEBI:30616"/>
    </ligand>
</feature>
<feature type="binding site" evidence="2">
    <location>
        <position position="555"/>
    </location>
    <ligand>
        <name>ATP</name>
        <dbReference type="ChEBI" id="CHEBI:30616"/>
    </ligand>
</feature>
<feature type="glycosylation site" description="N-linked (GlcNAc...) asparagine" evidence="1">
    <location>
        <position position="71"/>
    </location>
</feature>
<feature type="glycosylation site" description="N-linked (GlcNAc...) asparagine" evidence="1">
    <location>
        <position position="78"/>
    </location>
</feature>
<feature type="glycosylation site" description="N-linked (GlcNAc...) asparagine" evidence="1">
    <location>
        <position position="101"/>
    </location>
</feature>
<feature type="glycosylation site" description="N-linked (GlcNAc...) asparagine" evidence="1">
    <location>
        <position position="109"/>
    </location>
</feature>
<feature type="glycosylation site" description="N-linked (GlcNAc...) asparagine" evidence="1">
    <location>
        <position position="150"/>
    </location>
</feature>
<feature type="glycosylation site" description="N-linked (GlcNAc...) asparagine" evidence="1">
    <location>
        <position position="158"/>
    </location>
</feature>
<feature type="glycosylation site" description="N-linked (GlcNAc...) asparagine" evidence="1">
    <location>
        <position position="177"/>
    </location>
</feature>
<feature type="glycosylation site" description="N-linked (GlcNAc...) asparagine" evidence="1">
    <location>
        <position position="230"/>
    </location>
</feature>
<feature type="glycosylation site" description="N-linked (GlcNAc...) asparagine" evidence="1">
    <location>
        <position position="332"/>
    </location>
</feature>
<feature type="glycosylation site" description="N-linked (GlcNAc...) asparagine" evidence="1">
    <location>
        <position position="391"/>
    </location>
</feature>
<feature type="glycosylation site" description="N-linked (GlcNAc...) asparagine" evidence="1">
    <location>
        <position position="429"/>
    </location>
</feature>
<feature type="glycosylation site" description="N-linked (GlcNAc...) asparagine" evidence="1">
    <location>
        <position position="437"/>
    </location>
</feature>
<evidence type="ECO:0000255" key="1"/>
<evidence type="ECO:0000255" key="2">
    <source>
        <dbReference type="PROSITE-ProRule" id="PRU00159"/>
    </source>
</evidence>
<evidence type="ECO:0000256" key="3">
    <source>
        <dbReference type="SAM" id="MobiDB-lite"/>
    </source>
</evidence>
<evidence type="ECO:0000305" key="4"/>
<proteinExistence type="evidence at protein level"/>
<sequence length="915" mass="99704">MVDQRRSALGFVLLLLCLVLFFDCVVVGQTQSRFSEKLILLNLRSSLGLRGTDWPIKGDPCVDWRGIQCENGSIIGINISGFRRTRIGKLNPQFSVDPLRNLTRLSYFNASGLALPGTIPEWFGVSLLALEVLDLSSCSVNGVVPFTLGNLTSLRTLNLSQNSLTSLVPSSLGQLLNLSQLDLSRNSFTGVLPQSFSSLKNLLTLDVSSNYLTGPIPPGLGALSKLIHLNFSSNSFSSPIPSELGDLVNLVDFDLSINSLSGSVPQELRKLSKLQLMAIGDNLLSGTLPVDLFSAESQLQTLVLRENGFSGSLPDVCWSLPKLRILDIAKNNFTGLLPYSSYDSDQIAEMVDISSNTFYGELTPILRRFRIMDLSGNYFEGKLPDYVTGENVSVTSNCLRNERRQKPSAICAAFYKSRGLDFDDFGRPNLTQPTSKNASSGISRRTVIILAAVGGGVAFILLFVILPIILVLCMRHRRRAAQRGNNDRPKPAGEASQQPPKGAQTFDLSRLGNAFSYEQLLQATEEFNDANLIKRGHSGNLFRGFLENGIPVVIKKIDVREGKSEGYISELELFSKAGHQRLVPFLGHCLENESQKFLVYKFMRHGDLASSLFRKSENEGDGLKSLDWITRLKIALGAAEGLSYLHHECSPPLVHRDVQASSILLDDKFEVRLGSLSEAYAQGDAYQSRISRLLRLPQSSEPSSSGVTNAICSYDVYCFGKVLLELVTGKLGISSPDNALAKEYMEEALPYISTNEKELVTKILDPSLMVDEDLLEEVWAMAIIAKSCLNPKPTRRPLMRHIVNALENPLKVVREDTNSGSGSSRLRTNSSRGSWNAAIFGSWRQSASDVTAVQAGATTSGGGGGGGGNGLRNSGSQGSSGRNNNNNGNSSSSRRRQSSEIVPEPAAYGVVEDNL</sequence>
<accession>C0LGK4</accession>
<accession>Q9SIX4</accession>
<keyword id="KW-0067">ATP-binding</keyword>
<keyword id="KW-0325">Glycoprotein</keyword>
<keyword id="KW-0418">Kinase</keyword>
<keyword id="KW-0433">Leucine-rich repeat</keyword>
<keyword id="KW-0472">Membrane</keyword>
<keyword id="KW-0547">Nucleotide-binding</keyword>
<keyword id="KW-0675">Receptor</keyword>
<keyword id="KW-1185">Reference proteome</keyword>
<keyword id="KW-0677">Repeat</keyword>
<keyword id="KW-0723">Serine/threonine-protein kinase</keyword>
<keyword id="KW-0732">Signal</keyword>
<keyword id="KW-0808">Transferase</keyword>
<keyword id="KW-0812">Transmembrane</keyword>
<keyword id="KW-1133">Transmembrane helix</keyword>
<protein>
    <recommendedName>
        <fullName>Probable LRR receptor-like serine/threonine-protein kinase At2g16250</fullName>
        <ecNumber>2.7.11.1</ecNumber>
    </recommendedName>
</protein>
<comment type="catalytic activity">
    <reaction>
        <text>L-seryl-[protein] + ATP = O-phospho-L-seryl-[protein] + ADP + H(+)</text>
        <dbReference type="Rhea" id="RHEA:17989"/>
        <dbReference type="Rhea" id="RHEA-COMP:9863"/>
        <dbReference type="Rhea" id="RHEA-COMP:11604"/>
        <dbReference type="ChEBI" id="CHEBI:15378"/>
        <dbReference type="ChEBI" id="CHEBI:29999"/>
        <dbReference type="ChEBI" id="CHEBI:30616"/>
        <dbReference type="ChEBI" id="CHEBI:83421"/>
        <dbReference type="ChEBI" id="CHEBI:456216"/>
        <dbReference type="EC" id="2.7.11.1"/>
    </reaction>
</comment>
<comment type="catalytic activity">
    <reaction>
        <text>L-threonyl-[protein] + ATP = O-phospho-L-threonyl-[protein] + ADP + H(+)</text>
        <dbReference type="Rhea" id="RHEA:46608"/>
        <dbReference type="Rhea" id="RHEA-COMP:11060"/>
        <dbReference type="Rhea" id="RHEA-COMP:11605"/>
        <dbReference type="ChEBI" id="CHEBI:15378"/>
        <dbReference type="ChEBI" id="CHEBI:30013"/>
        <dbReference type="ChEBI" id="CHEBI:30616"/>
        <dbReference type="ChEBI" id="CHEBI:61977"/>
        <dbReference type="ChEBI" id="CHEBI:456216"/>
        <dbReference type="EC" id="2.7.11.1"/>
    </reaction>
</comment>
<comment type="interaction">
    <interactant intactId="EBI-16943030">
        <id>C0LGK4</id>
    </interactant>
    <interactant intactId="EBI-20654598">
        <id>F4I065</id>
        <label>At1g49100</label>
    </interactant>
    <organismsDiffer>false</organismsDiffer>
    <experiments>2</experiments>
</comment>
<comment type="interaction">
    <interactant intactId="EBI-16943030">
        <id>C0LGK4</id>
    </interactant>
    <interactant intactId="EBI-16902047">
        <id>Q9FN37</id>
        <label>PSKR2</label>
    </interactant>
    <organismsDiffer>false</organismsDiffer>
    <experiments>2</experiments>
</comment>
<comment type="subcellular location">
    <subcellularLocation>
        <location evidence="1">Membrane</location>
        <topology evidence="1">Single-pass type I membrane protein</topology>
    </subcellularLocation>
</comment>
<comment type="similarity">
    <text evidence="2">Belongs to the protein kinase superfamily. Ser/Thr protein kinase family.</text>
</comment>
<comment type="sequence caution" evidence="4">
    <conflict type="erroneous gene model prediction">
        <sequence resource="EMBL-CDS" id="AAD22312"/>
    </conflict>
</comment>
<organism>
    <name type="scientific">Arabidopsis thaliana</name>
    <name type="common">Mouse-ear cress</name>
    <dbReference type="NCBI Taxonomy" id="3702"/>
    <lineage>
        <taxon>Eukaryota</taxon>
        <taxon>Viridiplantae</taxon>
        <taxon>Streptophyta</taxon>
        <taxon>Embryophyta</taxon>
        <taxon>Tracheophyta</taxon>
        <taxon>Spermatophyta</taxon>
        <taxon>Magnoliopsida</taxon>
        <taxon>eudicotyledons</taxon>
        <taxon>Gunneridae</taxon>
        <taxon>Pentapetalae</taxon>
        <taxon>rosids</taxon>
        <taxon>malvids</taxon>
        <taxon>Brassicales</taxon>
        <taxon>Brassicaceae</taxon>
        <taxon>Camelineae</taxon>
        <taxon>Arabidopsis</taxon>
    </lineage>
</organism>
<reference key="1">
    <citation type="journal article" date="1999" name="Nature">
        <title>Sequence and analysis of chromosome 2 of the plant Arabidopsis thaliana.</title>
        <authorList>
            <person name="Lin X."/>
            <person name="Kaul S."/>
            <person name="Rounsley S.D."/>
            <person name="Shea T.P."/>
            <person name="Benito M.-I."/>
            <person name="Town C.D."/>
            <person name="Fujii C.Y."/>
            <person name="Mason T.M."/>
            <person name="Bowman C.L."/>
            <person name="Barnstead M.E."/>
            <person name="Feldblyum T.V."/>
            <person name="Buell C.R."/>
            <person name="Ketchum K.A."/>
            <person name="Lee J.J."/>
            <person name="Ronning C.M."/>
            <person name="Koo H.L."/>
            <person name="Moffat K.S."/>
            <person name="Cronin L.A."/>
            <person name="Shen M."/>
            <person name="Pai G."/>
            <person name="Van Aken S."/>
            <person name="Umayam L."/>
            <person name="Tallon L.J."/>
            <person name="Gill J.E."/>
            <person name="Adams M.D."/>
            <person name="Carrera A.J."/>
            <person name="Creasy T.H."/>
            <person name="Goodman H.M."/>
            <person name="Somerville C.R."/>
            <person name="Copenhaver G.P."/>
            <person name="Preuss D."/>
            <person name="Nierman W.C."/>
            <person name="White O."/>
            <person name="Eisen J.A."/>
            <person name="Salzberg S.L."/>
            <person name="Fraser C.M."/>
            <person name="Venter J.C."/>
        </authorList>
    </citation>
    <scope>NUCLEOTIDE SEQUENCE [LARGE SCALE GENOMIC DNA]</scope>
    <source>
        <strain>cv. Columbia</strain>
    </source>
</reference>
<reference key="2">
    <citation type="journal article" date="2017" name="Plant J.">
        <title>Araport11: a complete reannotation of the Arabidopsis thaliana reference genome.</title>
        <authorList>
            <person name="Cheng C.Y."/>
            <person name="Krishnakumar V."/>
            <person name="Chan A.P."/>
            <person name="Thibaud-Nissen F."/>
            <person name="Schobel S."/>
            <person name="Town C.D."/>
        </authorList>
    </citation>
    <scope>GENOME REANNOTATION</scope>
    <source>
        <strain>cv. Columbia</strain>
    </source>
</reference>
<reference key="3">
    <citation type="journal article" date="2010" name="BMC Genomics">
        <title>Genome-wide cloning and sequence analysis of leucine-rich repeat receptor-like protein kinase genes in Arabidopsis thaliana.</title>
        <authorList>
            <person name="Gou X."/>
            <person name="He K."/>
            <person name="Yang H."/>
            <person name="Yuan T."/>
            <person name="Lin H."/>
            <person name="Clouse S.D."/>
            <person name="Li J."/>
        </authorList>
    </citation>
    <scope>NUCLEOTIDE SEQUENCE [LARGE SCALE MRNA]</scope>
    <source>
        <strain>cv. Columbia</strain>
    </source>
</reference>